<evidence type="ECO:0000255" key="1">
    <source>
        <dbReference type="HAMAP-Rule" id="MF_01595"/>
    </source>
</evidence>
<evidence type="ECO:0000256" key="2">
    <source>
        <dbReference type="SAM" id="MobiDB-lite"/>
    </source>
</evidence>
<gene>
    <name evidence="1" type="primary">pnp</name>
    <name type="ordered locus">A1C_03560</name>
</gene>
<keyword id="KW-0963">Cytoplasm</keyword>
<keyword id="KW-0460">Magnesium</keyword>
<keyword id="KW-0479">Metal-binding</keyword>
<keyword id="KW-0548">Nucleotidyltransferase</keyword>
<keyword id="KW-0694">RNA-binding</keyword>
<keyword id="KW-0808">Transferase</keyword>
<reference key="1">
    <citation type="submission" date="2007-09" db="EMBL/GenBank/DDBJ databases">
        <title>Complete genome sequence of Rickettsia akari.</title>
        <authorList>
            <person name="Madan A."/>
            <person name="Fahey J."/>
            <person name="Helton E."/>
            <person name="Ketteman M."/>
            <person name="Madan A."/>
            <person name="Rodrigues S."/>
            <person name="Sanchez A."/>
            <person name="Whiting M."/>
            <person name="Dasch G."/>
            <person name="Eremeeva M."/>
        </authorList>
    </citation>
    <scope>NUCLEOTIDE SEQUENCE [LARGE SCALE GENOMIC DNA]</scope>
    <source>
        <strain>Hartford</strain>
    </source>
</reference>
<organism>
    <name type="scientific">Rickettsia akari (strain Hartford)</name>
    <dbReference type="NCBI Taxonomy" id="293614"/>
    <lineage>
        <taxon>Bacteria</taxon>
        <taxon>Pseudomonadati</taxon>
        <taxon>Pseudomonadota</taxon>
        <taxon>Alphaproteobacteria</taxon>
        <taxon>Rickettsiales</taxon>
        <taxon>Rickettsiaceae</taxon>
        <taxon>Rickettsieae</taxon>
        <taxon>Rickettsia</taxon>
        <taxon>spotted fever group</taxon>
    </lineage>
</organism>
<comment type="function">
    <text evidence="1">Involved in mRNA degradation. Catalyzes the phosphorolysis of single-stranded polyribonucleotides processively in the 3'- to 5'-direction.</text>
</comment>
<comment type="catalytic activity">
    <reaction evidence="1">
        <text>RNA(n+1) + phosphate = RNA(n) + a ribonucleoside 5'-diphosphate</text>
        <dbReference type="Rhea" id="RHEA:22096"/>
        <dbReference type="Rhea" id="RHEA-COMP:14527"/>
        <dbReference type="Rhea" id="RHEA-COMP:17342"/>
        <dbReference type="ChEBI" id="CHEBI:43474"/>
        <dbReference type="ChEBI" id="CHEBI:57930"/>
        <dbReference type="ChEBI" id="CHEBI:140395"/>
        <dbReference type="EC" id="2.7.7.8"/>
    </reaction>
</comment>
<comment type="cofactor">
    <cofactor evidence="1">
        <name>Mg(2+)</name>
        <dbReference type="ChEBI" id="CHEBI:18420"/>
    </cofactor>
</comment>
<comment type="subcellular location">
    <subcellularLocation>
        <location evidence="1">Cytoplasm</location>
    </subcellularLocation>
</comment>
<comment type="similarity">
    <text evidence="1">Belongs to the polyribonucleotide nucleotidyltransferase family.</text>
</comment>
<protein>
    <recommendedName>
        <fullName evidence="1">Polyribonucleotide nucleotidyltransferase</fullName>
        <ecNumber evidence="1">2.7.7.8</ecNumber>
    </recommendedName>
    <alternativeName>
        <fullName evidence="1">Polynucleotide phosphorylase</fullName>
        <shortName evidence="1">PNPase</shortName>
    </alternativeName>
</protein>
<proteinExistence type="inferred from homology"/>
<name>PNP_RICAH</name>
<sequence>MFNEITKSVTWNGKVLELSTGKIARQADGAVTVKMGNSVLLCAAVVANKAKEGIGFFPLTINYREMAYAAGKIPGGFFKREGKASDREVLVSRLIDRPIRPLFHPAFVNETHVTCTVLSYDPETPVDILAIIGASAALSLSPAPYLEIVAASKVGLIDGEFVLNPTLELLKTSQLDLVVAGTADSVMMVESEANLLSEEQMLEAVKFGFESFQPIIKIIKELAKEAKKPKFQMQDLYPASLKKEIEKLFVKEIKQAFAIKSKQERSTNLDLIHEKVLTHFVSDIENKKYSNYQIESALKSIESDILRNEILEKNRRIDGRSTTDIRQIACEIGLLPSAHGSALFTRGETQSLVSTTFGTSLDEQLVDSLDGEYKERFMLDYIFPPYSVNEAMPMKAPSRREVGHGKLAWRAINPILPNKVQFPYAIRVVAETTESNGSSSMATVCSSSLALMYAGVPIKAPVAGIAMGLVKEGKKFAVLSDILGDEDYFGDMDFKVAGTSEGITALQMDIKISGVDFKIMKAALEQARLGRLHILDQMNKIISKPNSKLGKNVPSTTTIKIDKDKIRDVIGPGGKVIKEICETSDAKIDISDDGTVSVYASDRDKLKVALDKIKAIAVEPEIGEIFNGTVMKVLDSGAFINYLGTKDGFVHISEIAEERIETVGSVLKQGDIVKVKLIGFDNKGKAKLTIKNADKDKSSNNPKQKNNVNNSKENSEPERRDSSKKRAWNEDNNSDTTEVITERKYFN</sequence>
<accession>A8GNL8</accession>
<feature type="chain" id="PRO_0000329815" description="Polyribonucleotide nucleotidyltransferase">
    <location>
        <begin position="1"/>
        <end position="747"/>
    </location>
</feature>
<feature type="domain" description="KH" evidence="1">
    <location>
        <begin position="554"/>
        <end position="613"/>
    </location>
</feature>
<feature type="domain" description="S1 motif" evidence="1">
    <location>
        <begin position="623"/>
        <end position="691"/>
    </location>
</feature>
<feature type="region of interest" description="Disordered" evidence="2">
    <location>
        <begin position="691"/>
        <end position="747"/>
    </location>
</feature>
<feature type="compositionally biased region" description="Low complexity" evidence="2">
    <location>
        <begin position="699"/>
        <end position="712"/>
    </location>
</feature>
<feature type="compositionally biased region" description="Polar residues" evidence="2">
    <location>
        <begin position="730"/>
        <end position="739"/>
    </location>
</feature>
<feature type="binding site" evidence="1">
    <location>
        <position position="487"/>
    </location>
    <ligand>
        <name>Mg(2+)</name>
        <dbReference type="ChEBI" id="CHEBI:18420"/>
    </ligand>
</feature>
<feature type="binding site" evidence="1">
    <location>
        <position position="493"/>
    </location>
    <ligand>
        <name>Mg(2+)</name>
        <dbReference type="ChEBI" id="CHEBI:18420"/>
    </ligand>
</feature>
<dbReference type="EC" id="2.7.7.8" evidence="1"/>
<dbReference type="EMBL" id="CP000847">
    <property type="protein sequence ID" value="ABV74993.1"/>
    <property type="molecule type" value="Genomic_DNA"/>
</dbReference>
<dbReference type="RefSeq" id="WP_012149625.1">
    <property type="nucleotide sequence ID" value="NC_009881.1"/>
</dbReference>
<dbReference type="SMR" id="A8GNL8"/>
<dbReference type="STRING" id="293614.A1C_03560"/>
<dbReference type="KEGG" id="rak:A1C_03560"/>
<dbReference type="eggNOG" id="COG1185">
    <property type="taxonomic scope" value="Bacteria"/>
</dbReference>
<dbReference type="HOGENOM" id="CLU_004217_2_2_5"/>
<dbReference type="Proteomes" id="UP000006830">
    <property type="component" value="Chromosome"/>
</dbReference>
<dbReference type="GO" id="GO:0005829">
    <property type="term" value="C:cytosol"/>
    <property type="evidence" value="ECO:0007669"/>
    <property type="project" value="TreeGrafter"/>
</dbReference>
<dbReference type="GO" id="GO:0000175">
    <property type="term" value="F:3'-5'-RNA exonuclease activity"/>
    <property type="evidence" value="ECO:0007669"/>
    <property type="project" value="TreeGrafter"/>
</dbReference>
<dbReference type="GO" id="GO:0000287">
    <property type="term" value="F:magnesium ion binding"/>
    <property type="evidence" value="ECO:0007669"/>
    <property type="project" value="UniProtKB-UniRule"/>
</dbReference>
<dbReference type="GO" id="GO:0004654">
    <property type="term" value="F:polyribonucleotide nucleotidyltransferase activity"/>
    <property type="evidence" value="ECO:0007669"/>
    <property type="project" value="UniProtKB-UniRule"/>
</dbReference>
<dbReference type="GO" id="GO:0003723">
    <property type="term" value="F:RNA binding"/>
    <property type="evidence" value="ECO:0007669"/>
    <property type="project" value="UniProtKB-UniRule"/>
</dbReference>
<dbReference type="GO" id="GO:0006402">
    <property type="term" value="P:mRNA catabolic process"/>
    <property type="evidence" value="ECO:0007669"/>
    <property type="project" value="UniProtKB-UniRule"/>
</dbReference>
<dbReference type="GO" id="GO:0006396">
    <property type="term" value="P:RNA processing"/>
    <property type="evidence" value="ECO:0007669"/>
    <property type="project" value="InterPro"/>
</dbReference>
<dbReference type="CDD" id="cd02393">
    <property type="entry name" value="KH-I_PNPase"/>
    <property type="match status" value="1"/>
</dbReference>
<dbReference type="CDD" id="cd11363">
    <property type="entry name" value="RNase_PH_PNPase_1"/>
    <property type="match status" value="1"/>
</dbReference>
<dbReference type="CDD" id="cd11364">
    <property type="entry name" value="RNase_PH_PNPase_2"/>
    <property type="match status" value="1"/>
</dbReference>
<dbReference type="FunFam" id="3.30.1370.10:FF:000001">
    <property type="entry name" value="Polyribonucleotide nucleotidyltransferase"/>
    <property type="match status" value="1"/>
</dbReference>
<dbReference type="FunFam" id="3.30.230.70:FF:000001">
    <property type="entry name" value="Polyribonucleotide nucleotidyltransferase"/>
    <property type="match status" value="1"/>
</dbReference>
<dbReference type="FunFam" id="3.30.230.70:FF:000002">
    <property type="entry name" value="Polyribonucleotide nucleotidyltransferase"/>
    <property type="match status" value="1"/>
</dbReference>
<dbReference type="FunFam" id="2.40.50.140:FF:000189">
    <property type="entry name" value="Polyribonucleotide nucleotidyltransferase, putative"/>
    <property type="match status" value="1"/>
</dbReference>
<dbReference type="Gene3D" id="3.30.230.70">
    <property type="entry name" value="GHMP Kinase, N-terminal domain"/>
    <property type="match status" value="2"/>
</dbReference>
<dbReference type="Gene3D" id="3.30.1370.10">
    <property type="entry name" value="K Homology domain, type 1"/>
    <property type="match status" value="1"/>
</dbReference>
<dbReference type="Gene3D" id="2.40.50.140">
    <property type="entry name" value="Nucleic acid-binding proteins"/>
    <property type="match status" value="1"/>
</dbReference>
<dbReference type="HAMAP" id="MF_01595">
    <property type="entry name" value="PNPase"/>
    <property type="match status" value="1"/>
</dbReference>
<dbReference type="InterPro" id="IPR001247">
    <property type="entry name" value="ExoRNase_PH_dom1"/>
</dbReference>
<dbReference type="InterPro" id="IPR015847">
    <property type="entry name" value="ExoRNase_PH_dom2"/>
</dbReference>
<dbReference type="InterPro" id="IPR036345">
    <property type="entry name" value="ExoRNase_PH_dom2_sf"/>
</dbReference>
<dbReference type="InterPro" id="IPR004087">
    <property type="entry name" value="KH_dom"/>
</dbReference>
<dbReference type="InterPro" id="IPR004088">
    <property type="entry name" value="KH_dom_type_1"/>
</dbReference>
<dbReference type="InterPro" id="IPR036612">
    <property type="entry name" value="KH_dom_type_1_sf"/>
</dbReference>
<dbReference type="InterPro" id="IPR012340">
    <property type="entry name" value="NA-bd_OB-fold"/>
</dbReference>
<dbReference type="InterPro" id="IPR012162">
    <property type="entry name" value="PNPase"/>
</dbReference>
<dbReference type="InterPro" id="IPR027408">
    <property type="entry name" value="PNPase/RNase_PH_dom_sf"/>
</dbReference>
<dbReference type="InterPro" id="IPR015848">
    <property type="entry name" value="PNPase_PH_RNA-bd_bac/org-type"/>
</dbReference>
<dbReference type="InterPro" id="IPR036456">
    <property type="entry name" value="PNPase_PH_RNA-bd_sf"/>
</dbReference>
<dbReference type="InterPro" id="IPR020568">
    <property type="entry name" value="Ribosomal_Su5_D2-typ_SF"/>
</dbReference>
<dbReference type="InterPro" id="IPR003029">
    <property type="entry name" value="S1_domain"/>
</dbReference>
<dbReference type="NCBIfam" id="TIGR03591">
    <property type="entry name" value="polynuc_phos"/>
    <property type="match status" value="1"/>
</dbReference>
<dbReference type="NCBIfam" id="NF008805">
    <property type="entry name" value="PRK11824.1"/>
    <property type="match status" value="1"/>
</dbReference>
<dbReference type="PANTHER" id="PTHR11252">
    <property type="entry name" value="POLYRIBONUCLEOTIDE NUCLEOTIDYLTRANSFERASE"/>
    <property type="match status" value="1"/>
</dbReference>
<dbReference type="PANTHER" id="PTHR11252:SF0">
    <property type="entry name" value="POLYRIBONUCLEOTIDE NUCLEOTIDYLTRANSFERASE 1, MITOCHONDRIAL"/>
    <property type="match status" value="1"/>
</dbReference>
<dbReference type="Pfam" id="PF00013">
    <property type="entry name" value="KH_1"/>
    <property type="match status" value="1"/>
</dbReference>
<dbReference type="Pfam" id="PF03726">
    <property type="entry name" value="PNPase"/>
    <property type="match status" value="1"/>
</dbReference>
<dbReference type="Pfam" id="PF01138">
    <property type="entry name" value="RNase_PH"/>
    <property type="match status" value="2"/>
</dbReference>
<dbReference type="Pfam" id="PF03725">
    <property type="entry name" value="RNase_PH_C"/>
    <property type="match status" value="2"/>
</dbReference>
<dbReference type="Pfam" id="PF00575">
    <property type="entry name" value="S1"/>
    <property type="match status" value="1"/>
</dbReference>
<dbReference type="PIRSF" id="PIRSF005499">
    <property type="entry name" value="PNPase"/>
    <property type="match status" value="1"/>
</dbReference>
<dbReference type="SMART" id="SM00322">
    <property type="entry name" value="KH"/>
    <property type="match status" value="1"/>
</dbReference>
<dbReference type="SMART" id="SM00316">
    <property type="entry name" value="S1"/>
    <property type="match status" value="1"/>
</dbReference>
<dbReference type="SUPFAM" id="SSF54791">
    <property type="entry name" value="Eukaryotic type KH-domain (KH-domain type I)"/>
    <property type="match status" value="1"/>
</dbReference>
<dbReference type="SUPFAM" id="SSF50249">
    <property type="entry name" value="Nucleic acid-binding proteins"/>
    <property type="match status" value="1"/>
</dbReference>
<dbReference type="SUPFAM" id="SSF46915">
    <property type="entry name" value="Polynucleotide phosphorylase/guanosine pentaphosphate synthase (PNPase/GPSI), domain 3"/>
    <property type="match status" value="1"/>
</dbReference>
<dbReference type="SUPFAM" id="SSF55666">
    <property type="entry name" value="Ribonuclease PH domain 2-like"/>
    <property type="match status" value="2"/>
</dbReference>
<dbReference type="SUPFAM" id="SSF54211">
    <property type="entry name" value="Ribosomal protein S5 domain 2-like"/>
    <property type="match status" value="2"/>
</dbReference>
<dbReference type="PROSITE" id="PS50084">
    <property type="entry name" value="KH_TYPE_1"/>
    <property type="match status" value="1"/>
</dbReference>
<dbReference type="PROSITE" id="PS50126">
    <property type="entry name" value="S1"/>
    <property type="match status" value="1"/>
</dbReference>